<reference key="1">
    <citation type="journal article" date="2002" name="J. Bacteriol.">
        <title>Whole-genome comparison of Mycobacterium tuberculosis clinical and laboratory strains.</title>
        <authorList>
            <person name="Fleischmann R.D."/>
            <person name="Alland D."/>
            <person name="Eisen J.A."/>
            <person name="Carpenter L."/>
            <person name="White O."/>
            <person name="Peterson J.D."/>
            <person name="DeBoy R.T."/>
            <person name="Dodson R.J."/>
            <person name="Gwinn M.L."/>
            <person name="Haft D.H."/>
            <person name="Hickey E.K."/>
            <person name="Kolonay J.F."/>
            <person name="Nelson W.C."/>
            <person name="Umayam L.A."/>
            <person name="Ermolaeva M.D."/>
            <person name="Salzberg S.L."/>
            <person name="Delcher A."/>
            <person name="Utterback T.R."/>
            <person name="Weidman J.F."/>
            <person name="Khouri H.M."/>
            <person name="Gill J."/>
            <person name="Mikula A."/>
            <person name="Bishai W."/>
            <person name="Jacobs W.R. Jr."/>
            <person name="Venter J.C."/>
            <person name="Fraser C.M."/>
        </authorList>
    </citation>
    <scope>NUCLEOTIDE SEQUENCE [LARGE SCALE GENOMIC DNA]</scope>
    <source>
        <strain>CDC 1551 / Oshkosh</strain>
    </source>
</reference>
<keyword id="KW-0175">Coiled coil</keyword>
<keyword id="KW-1185">Reference proteome</keyword>
<keyword id="KW-1277">Toxin-antitoxin system</keyword>
<gene>
    <name type="primary">parD1</name>
    <name type="ordered locus">MT2009</name>
</gene>
<name>PARD1_MYCTO</name>
<evidence type="ECO:0000250" key="1"/>
<evidence type="ECO:0000255" key="2"/>
<evidence type="ECO:0000256" key="3">
    <source>
        <dbReference type="SAM" id="MobiDB-lite"/>
    </source>
</evidence>
<evidence type="ECO:0000305" key="4"/>
<feature type="chain" id="PRO_0000427995" description="Antitoxin ParD1">
    <location>
        <begin position="1"/>
        <end position="83"/>
    </location>
</feature>
<feature type="region of interest" description="Disordered" evidence="3">
    <location>
        <begin position="54"/>
        <end position="83"/>
    </location>
</feature>
<feature type="coiled-coil region" evidence="2">
    <location>
        <begin position="33"/>
        <end position="60"/>
    </location>
</feature>
<proteinExistence type="inferred from homology"/>
<sequence length="83" mass="9239">MGKNTSFVLDEHYSAFIDGEIAAGRYRSASEVIRSALRLLEDRETQLRALREALEAGERSGSSTPFDFDGFLGRKRADASRGR</sequence>
<comment type="function">
    <text evidence="1">Antitoxin component of a type II toxin-antitoxin (TA) system.</text>
</comment>
<comment type="similarity">
    <text evidence="4">Belongs to the ParD antitoxin family.</text>
</comment>
<protein>
    <recommendedName>
        <fullName>Antitoxin ParD1</fullName>
    </recommendedName>
</protein>
<organism>
    <name type="scientific">Mycobacterium tuberculosis (strain CDC 1551 / Oshkosh)</name>
    <dbReference type="NCBI Taxonomy" id="83331"/>
    <lineage>
        <taxon>Bacteria</taxon>
        <taxon>Bacillati</taxon>
        <taxon>Actinomycetota</taxon>
        <taxon>Actinomycetes</taxon>
        <taxon>Mycobacteriales</taxon>
        <taxon>Mycobacteriaceae</taxon>
        <taxon>Mycobacterium</taxon>
        <taxon>Mycobacterium tuberculosis complex</taxon>
    </lineage>
</organism>
<accession>P9WIJ6</accession>
<accession>L0T8D6</accession>
<accession>P67298</accession>
<accession>P95254</accession>
<dbReference type="EMBL" id="AE000516">
    <property type="protein sequence ID" value="AAK46281.1"/>
    <property type="molecule type" value="Genomic_DNA"/>
</dbReference>
<dbReference type="PIR" id="D70639">
    <property type="entry name" value="D70639"/>
</dbReference>
<dbReference type="RefSeq" id="WP_003409899.1">
    <property type="nucleotide sequence ID" value="NZ_KK341227.1"/>
</dbReference>
<dbReference type="SMR" id="P9WIJ6"/>
<dbReference type="KEGG" id="mtc:MT2009"/>
<dbReference type="PATRIC" id="fig|83331.31.peg.2165"/>
<dbReference type="HOGENOM" id="CLU_144805_2_0_11"/>
<dbReference type="Proteomes" id="UP000001020">
    <property type="component" value="Chromosome"/>
</dbReference>
<dbReference type="GO" id="GO:0006355">
    <property type="term" value="P:regulation of DNA-templated transcription"/>
    <property type="evidence" value="ECO:0007669"/>
    <property type="project" value="InterPro"/>
</dbReference>
<dbReference type="CDD" id="cd22231">
    <property type="entry name" value="RHH_NikR_HicB-like"/>
    <property type="match status" value="1"/>
</dbReference>
<dbReference type="Gene3D" id="6.10.10.120">
    <property type="entry name" value="Antitoxin ParD1-like"/>
    <property type="match status" value="1"/>
</dbReference>
<dbReference type="InterPro" id="IPR022789">
    <property type="entry name" value="ParD"/>
</dbReference>
<dbReference type="InterPro" id="IPR038296">
    <property type="entry name" value="ParD_sf"/>
</dbReference>
<dbReference type="InterPro" id="IPR010985">
    <property type="entry name" value="Ribbon_hlx_hlx"/>
</dbReference>
<dbReference type="NCBIfam" id="TIGR02606">
    <property type="entry name" value="antidote_CC2985"/>
    <property type="match status" value="1"/>
</dbReference>
<dbReference type="PANTHER" id="PTHR36582">
    <property type="entry name" value="ANTITOXIN PARD"/>
    <property type="match status" value="1"/>
</dbReference>
<dbReference type="PANTHER" id="PTHR36582:SF2">
    <property type="entry name" value="ANTITOXIN PARD"/>
    <property type="match status" value="1"/>
</dbReference>
<dbReference type="Pfam" id="PF03693">
    <property type="entry name" value="ParD_antitoxin"/>
    <property type="match status" value="1"/>
</dbReference>
<dbReference type="SUPFAM" id="SSF47598">
    <property type="entry name" value="Ribbon-helix-helix"/>
    <property type="match status" value="1"/>
</dbReference>